<reference key="1">
    <citation type="journal article" date="2011" name="MBio">
        <title>Novel metabolic attributes of the genus Cyanothece, comprising a group of unicellular nitrogen-fixing Cyanobacteria.</title>
        <authorList>
            <person name="Bandyopadhyay A."/>
            <person name="Elvitigala T."/>
            <person name="Welsh E."/>
            <person name="Stockel J."/>
            <person name="Liberton M."/>
            <person name="Min H."/>
            <person name="Sherman L.A."/>
            <person name="Pakrasi H.B."/>
        </authorList>
    </citation>
    <scope>NUCLEOTIDE SEQUENCE [LARGE SCALE GENOMIC DNA]</scope>
    <source>
        <strain>PCC 8801 / RF-1</strain>
    </source>
</reference>
<organism>
    <name type="scientific">Rippkaea orientalis (strain PCC 8801 / RF-1)</name>
    <name type="common">Cyanothece sp. (strain PCC 8801)</name>
    <dbReference type="NCBI Taxonomy" id="41431"/>
    <lineage>
        <taxon>Bacteria</taxon>
        <taxon>Bacillati</taxon>
        <taxon>Cyanobacteriota</taxon>
        <taxon>Cyanophyceae</taxon>
        <taxon>Oscillatoriophycideae</taxon>
        <taxon>Chroococcales</taxon>
        <taxon>Aphanothecaceae</taxon>
        <taxon>Rippkaea</taxon>
        <taxon>Rippkaea orientalis</taxon>
    </lineage>
</organism>
<dbReference type="EMBL" id="CP001287">
    <property type="protein sequence ID" value="ACK66722.1"/>
    <property type="molecule type" value="Genomic_DNA"/>
</dbReference>
<dbReference type="RefSeq" id="WP_012595989.1">
    <property type="nucleotide sequence ID" value="NC_011726.1"/>
</dbReference>
<dbReference type="SMR" id="B7K5I9"/>
<dbReference type="STRING" id="41431.PCC8801_2721"/>
<dbReference type="KEGG" id="cyp:PCC8801_2721"/>
<dbReference type="eggNOG" id="COG0224">
    <property type="taxonomic scope" value="Bacteria"/>
</dbReference>
<dbReference type="HOGENOM" id="CLU_050669_0_0_3"/>
<dbReference type="OrthoDB" id="9812769at2"/>
<dbReference type="Proteomes" id="UP000008204">
    <property type="component" value="Chromosome"/>
</dbReference>
<dbReference type="GO" id="GO:0031676">
    <property type="term" value="C:plasma membrane-derived thylakoid membrane"/>
    <property type="evidence" value="ECO:0007669"/>
    <property type="project" value="UniProtKB-SubCell"/>
</dbReference>
<dbReference type="GO" id="GO:0045259">
    <property type="term" value="C:proton-transporting ATP synthase complex"/>
    <property type="evidence" value="ECO:0007669"/>
    <property type="project" value="UniProtKB-KW"/>
</dbReference>
<dbReference type="GO" id="GO:0005524">
    <property type="term" value="F:ATP binding"/>
    <property type="evidence" value="ECO:0007669"/>
    <property type="project" value="UniProtKB-UniRule"/>
</dbReference>
<dbReference type="GO" id="GO:0046933">
    <property type="term" value="F:proton-transporting ATP synthase activity, rotational mechanism"/>
    <property type="evidence" value="ECO:0007669"/>
    <property type="project" value="UniProtKB-UniRule"/>
</dbReference>
<dbReference type="CDD" id="cd12151">
    <property type="entry name" value="F1-ATPase_gamma"/>
    <property type="match status" value="1"/>
</dbReference>
<dbReference type="FunFam" id="3.40.1380.10:FF:000006">
    <property type="entry name" value="ATP synthase gamma chain"/>
    <property type="match status" value="1"/>
</dbReference>
<dbReference type="FunFam" id="1.10.287.80:FF:000003">
    <property type="entry name" value="ATP synthase gamma chain, chloroplastic"/>
    <property type="match status" value="1"/>
</dbReference>
<dbReference type="FunFam" id="1.10.287.80:FF:000004">
    <property type="entry name" value="ATP synthase gamma chain, chloroplastic"/>
    <property type="match status" value="1"/>
</dbReference>
<dbReference type="Gene3D" id="3.40.1380.10">
    <property type="match status" value="1"/>
</dbReference>
<dbReference type="Gene3D" id="1.10.287.80">
    <property type="entry name" value="ATP synthase, gamma subunit, helix hairpin domain"/>
    <property type="match status" value="2"/>
</dbReference>
<dbReference type="HAMAP" id="MF_00815">
    <property type="entry name" value="ATP_synth_gamma_bact"/>
    <property type="match status" value="1"/>
</dbReference>
<dbReference type="InterPro" id="IPR035968">
    <property type="entry name" value="ATP_synth_F1_ATPase_gsu"/>
</dbReference>
<dbReference type="InterPro" id="IPR000131">
    <property type="entry name" value="ATP_synth_F1_gsu"/>
</dbReference>
<dbReference type="NCBIfam" id="TIGR01146">
    <property type="entry name" value="ATPsyn_F1gamma"/>
    <property type="match status" value="1"/>
</dbReference>
<dbReference type="NCBIfam" id="NF004145">
    <property type="entry name" value="PRK05621.1-2"/>
    <property type="match status" value="1"/>
</dbReference>
<dbReference type="PANTHER" id="PTHR11693">
    <property type="entry name" value="ATP SYNTHASE GAMMA CHAIN"/>
    <property type="match status" value="1"/>
</dbReference>
<dbReference type="PANTHER" id="PTHR11693:SF41">
    <property type="entry name" value="ATP SYNTHASE GAMMA CHAIN, CHLOROPLASTIC"/>
    <property type="match status" value="1"/>
</dbReference>
<dbReference type="Pfam" id="PF00231">
    <property type="entry name" value="ATP-synt"/>
    <property type="match status" value="1"/>
</dbReference>
<dbReference type="PRINTS" id="PR00126">
    <property type="entry name" value="ATPASEGAMMA"/>
</dbReference>
<dbReference type="SUPFAM" id="SSF52943">
    <property type="entry name" value="ATP synthase (F1-ATPase), gamma subunit"/>
    <property type="match status" value="1"/>
</dbReference>
<protein>
    <recommendedName>
        <fullName evidence="1">ATP synthase gamma chain</fullName>
    </recommendedName>
    <alternativeName>
        <fullName evidence="1">ATP synthase F1 sector gamma subunit</fullName>
    </alternativeName>
    <alternativeName>
        <fullName evidence="1">F-ATPase gamma subunit</fullName>
    </alternativeName>
</protein>
<comment type="function">
    <text evidence="1">Produces ATP from ADP in the presence of a proton gradient across the membrane. The gamma chain is believed to be important in regulating ATPase activity and the flow of protons through the CF(0) complex.</text>
</comment>
<comment type="subunit">
    <text evidence="1">F-type ATPases have 2 components, CF(1) - the catalytic core - and CF(0) - the membrane proton channel. CF(1) has five subunits: alpha(3), beta(3), gamma(1), delta(1), epsilon(1). CF(0) has three main subunits: a, b and c.</text>
</comment>
<comment type="subcellular location">
    <subcellularLocation>
        <location evidence="1">Cellular thylakoid membrane</location>
        <topology evidence="1">Peripheral membrane protein</topology>
    </subcellularLocation>
</comment>
<comment type="similarity">
    <text evidence="1">Belongs to the ATPase gamma chain family.</text>
</comment>
<feature type="chain" id="PRO_1000134135" description="ATP synthase gamma chain">
    <location>
        <begin position="1"/>
        <end position="314"/>
    </location>
</feature>
<proteinExistence type="inferred from homology"/>
<gene>
    <name evidence="1" type="primary">atpG</name>
    <name evidence="1" type="synonym">atpC</name>
    <name type="ordered locus">PCC8801_2721</name>
</gene>
<sequence>MPNLKAIRDRIQSVKNTKKITEAMRLVAAAKVRRAQEQVIATRPFADALANVLYNLLNRLQYGDVSLPLLQQRQVKTVALVVVSGDRGLCGGYNTYVIRRAEQRQKELEAQGINYRLITIGRKATQYFSRRQAPIEKTYVGLNQIPTADEAGSIADELLSLFLSETVDRVELIYTRFVSLISSRPVVQTLLPLTVQGLEVEDDEVFRLITRDGKLRVERETIAQEVSSFPQDMIFEQDPIQILDALLPLYINNQLLRGLQEAAASELAARMTAMSNASDNAGQLIGTLTLSYNKARQAAITQQLMEVVAGANAL</sequence>
<accession>B7K5I9</accession>
<keyword id="KW-0066">ATP synthesis</keyword>
<keyword id="KW-0139">CF(1)</keyword>
<keyword id="KW-0375">Hydrogen ion transport</keyword>
<keyword id="KW-0406">Ion transport</keyword>
<keyword id="KW-0472">Membrane</keyword>
<keyword id="KW-1185">Reference proteome</keyword>
<keyword id="KW-0793">Thylakoid</keyword>
<keyword id="KW-0813">Transport</keyword>
<name>ATPG_RIPO1</name>
<evidence type="ECO:0000255" key="1">
    <source>
        <dbReference type="HAMAP-Rule" id="MF_00815"/>
    </source>
</evidence>